<keyword id="KW-0002">3D-structure</keyword>
<keyword id="KW-0025">Alternative splicing</keyword>
<keyword id="KW-1003">Cell membrane</keyword>
<keyword id="KW-0963">Cytoplasm</keyword>
<keyword id="KW-0325">Glycoprotein</keyword>
<keyword id="KW-0378">Hydrolase</keyword>
<keyword id="KW-0472">Membrane</keyword>
<keyword id="KW-0597">Phosphoprotein</keyword>
<keyword id="KW-0904">Protein phosphatase</keyword>
<keyword id="KW-0654">Proteoglycan</keyword>
<keyword id="KW-1267">Proteomics identification</keyword>
<keyword id="KW-0675">Receptor</keyword>
<keyword id="KW-1185">Reference proteome</keyword>
<keyword id="KW-0964">Secreted</keyword>
<keyword id="KW-0732">Signal</keyword>
<keyword id="KW-0812">Transmembrane</keyword>
<keyword id="KW-1133">Transmembrane helix</keyword>
<accession>Q15256</accession>
<accession>B2R5Z7</accession>
<accession>B7Z3J1</accession>
<accession>F5GXR7</accession>
<accession>O00342</accession>
<accession>Q92682</accession>
<accession>Q9UE65</accession>
<proteinExistence type="evidence at protein level"/>
<dbReference type="EC" id="3.1.3.48"/>
<dbReference type="EMBL" id="D64053">
    <property type="protein sequence ID" value="BAA10930.1"/>
    <property type="molecule type" value="mRNA"/>
</dbReference>
<dbReference type="EMBL" id="U42361">
    <property type="protein sequence ID" value="AAD09447.1"/>
    <property type="molecule type" value="mRNA"/>
</dbReference>
<dbReference type="EMBL" id="U77917">
    <property type="protein sequence ID" value="AAB54007.1"/>
    <property type="molecule type" value="mRNA"/>
</dbReference>
<dbReference type="EMBL" id="U77916">
    <property type="protein sequence ID" value="AAB54006.1"/>
    <property type="molecule type" value="mRNA"/>
</dbReference>
<dbReference type="EMBL" id="AF263029">
    <property type="protein sequence ID" value="AAG47642.1"/>
    <property type="molecule type" value="Genomic_DNA"/>
</dbReference>
<dbReference type="EMBL" id="AF263016">
    <property type="protein sequence ID" value="AAG47642.1"/>
    <property type="status" value="JOINED"/>
    <property type="molecule type" value="Genomic_DNA"/>
</dbReference>
<dbReference type="EMBL" id="AF263017">
    <property type="protein sequence ID" value="AAG47642.1"/>
    <property type="status" value="JOINED"/>
    <property type="molecule type" value="Genomic_DNA"/>
</dbReference>
<dbReference type="EMBL" id="AF263018">
    <property type="protein sequence ID" value="AAG47642.1"/>
    <property type="status" value="JOINED"/>
    <property type="molecule type" value="Genomic_DNA"/>
</dbReference>
<dbReference type="EMBL" id="AF263019">
    <property type="protein sequence ID" value="AAG47642.1"/>
    <property type="status" value="JOINED"/>
    <property type="molecule type" value="Genomic_DNA"/>
</dbReference>
<dbReference type="EMBL" id="AF263020">
    <property type="protein sequence ID" value="AAG47642.1"/>
    <property type="status" value="JOINED"/>
    <property type="molecule type" value="Genomic_DNA"/>
</dbReference>
<dbReference type="EMBL" id="AF263021">
    <property type="protein sequence ID" value="AAG47642.1"/>
    <property type="status" value="JOINED"/>
    <property type="molecule type" value="Genomic_DNA"/>
</dbReference>
<dbReference type="EMBL" id="AF263022">
    <property type="protein sequence ID" value="AAG47642.1"/>
    <property type="status" value="JOINED"/>
    <property type="molecule type" value="Genomic_DNA"/>
</dbReference>
<dbReference type="EMBL" id="AF263023">
    <property type="protein sequence ID" value="AAG47642.1"/>
    <property type="status" value="JOINED"/>
    <property type="molecule type" value="Genomic_DNA"/>
</dbReference>
<dbReference type="EMBL" id="AF263024">
    <property type="protein sequence ID" value="AAG47642.1"/>
    <property type="status" value="JOINED"/>
    <property type="molecule type" value="Genomic_DNA"/>
</dbReference>
<dbReference type="EMBL" id="AF263025">
    <property type="protein sequence ID" value="AAG47642.1"/>
    <property type="status" value="JOINED"/>
    <property type="molecule type" value="Genomic_DNA"/>
</dbReference>
<dbReference type="EMBL" id="AF263026">
    <property type="protein sequence ID" value="AAG47642.1"/>
    <property type="status" value="JOINED"/>
    <property type="molecule type" value="Genomic_DNA"/>
</dbReference>
<dbReference type="EMBL" id="AF263027">
    <property type="protein sequence ID" value="AAG47642.1"/>
    <property type="status" value="JOINED"/>
    <property type="molecule type" value="Genomic_DNA"/>
</dbReference>
<dbReference type="EMBL" id="AF263028">
    <property type="protein sequence ID" value="AAG47642.1"/>
    <property type="status" value="JOINED"/>
    <property type="molecule type" value="Genomic_DNA"/>
</dbReference>
<dbReference type="EMBL" id="Z79693">
    <property type="protein sequence ID" value="CAB01957.1"/>
    <property type="status" value="ALT_FRAME"/>
    <property type="molecule type" value="mRNA"/>
</dbReference>
<dbReference type="EMBL" id="AK295951">
    <property type="protein sequence ID" value="BAH12227.1"/>
    <property type="molecule type" value="mRNA"/>
</dbReference>
<dbReference type="EMBL" id="AK312376">
    <property type="protein sequence ID" value="BAG35294.1"/>
    <property type="molecule type" value="mRNA"/>
</dbReference>
<dbReference type="EMBL" id="AC083809">
    <property type="status" value="NOT_ANNOTATED_CDS"/>
    <property type="molecule type" value="Genomic_DNA"/>
</dbReference>
<dbReference type="EMBL" id="AC084877">
    <property type="status" value="NOT_ANNOTATED_CDS"/>
    <property type="molecule type" value="Genomic_DNA"/>
</dbReference>
<dbReference type="EMBL" id="AC090676">
    <property type="status" value="NOT_ANNOTATED_CDS"/>
    <property type="molecule type" value="Genomic_DNA"/>
</dbReference>
<dbReference type="EMBL" id="AC140066">
    <property type="status" value="NOT_ANNOTATED_CDS"/>
    <property type="molecule type" value="Genomic_DNA"/>
</dbReference>
<dbReference type="EMBL" id="X82635">
    <property type="protein sequence ID" value="CAA57957.1"/>
    <property type="status" value="ALT_FRAME"/>
    <property type="molecule type" value="mRNA"/>
</dbReference>
<dbReference type="CCDS" id="CCDS44945.1">
    <molecule id="Q15256-3"/>
</dbReference>
<dbReference type="CCDS" id="CCDS55847.1">
    <molecule id="Q15256-4"/>
</dbReference>
<dbReference type="CCDS" id="CCDS55848.1">
    <molecule id="Q15256-5"/>
</dbReference>
<dbReference type="CCDS" id="CCDS8998.1">
    <molecule id="Q15256-1"/>
</dbReference>
<dbReference type="RefSeq" id="NP_001193944.1">
    <molecule id="Q15256-5"/>
    <property type="nucleotide sequence ID" value="NM_001207015.2"/>
</dbReference>
<dbReference type="RefSeq" id="NP_001193945.1">
    <molecule id="Q15256-4"/>
    <property type="nucleotide sequence ID" value="NM_001207016.1"/>
</dbReference>
<dbReference type="RefSeq" id="NP_002840.2">
    <molecule id="Q15256-1"/>
    <property type="nucleotide sequence ID" value="NM_002849.4"/>
</dbReference>
<dbReference type="RefSeq" id="NP_570897.2">
    <molecule id="Q15256-3"/>
    <property type="nucleotide sequence ID" value="NM_130846.3"/>
</dbReference>
<dbReference type="PDB" id="2A8B">
    <property type="method" value="X-ray"/>
    <property type="resolution" value="2.30 A"/>
    <property type="chains" value="A=375-655"/>
</dbReference>
<dbReference type="PDBsum" id="2A8B"/>
<dbReference type="SMR" id="Q15256"/>
<dbReference type="BioGRID" id="111765">
    <property type="interactions" value="105"/>
</dbReference>
<dbReference type="DIP" id="DIP-42066N"/>
<dbReference type="ELM" id="Q15256"/>
<dbReference type="FunCoup" id="Q15256">
    <property type="interactions" value="582"/>
</dbReference>
<dbReference type="IntAct" id="Q15256">
    <property type="interactions" value="89"/>
</dbReference>
<dbReference type="MINT" id="Q15256"/>
<dbReference type="STRING" id="9606.ENSP00000283228"/>
<dbReference type="BindingDB" id="Q15256"/>
<dbReference type="ChEMBL" id="CHEMBL3425390"/>
<dbReference type="DEPOD" id="PTPRR"/>
<dbReference type="GlyCosmos" id="Q15256">
    <property type="glycosylation" value="2 sites, 1 glycan"/>
</dbReference>
<dbReference type="GlyGen" id="Q15256">
    <property type="glycosylation" value="3 sites, 1 O-linked glycan (1 site)"/>
</dbReference>
<dbReference type="iPTMnet" id="Q15256"/>
<dbReference type="PhosphoSitePlus" id="Q15256"/>
<dbReference type="BioMuta" id="PTPRR"/>
<dbReference type="DMDM" id="134039192"/>
<dbReference type="jPOST" id="Q15256"/>
<dbReference type="MassIVE" id="Q15256"/>
<dbReference type="PaxDb" id="9606-ENSP00000283228"/>
<dbReference type="PeptideAtlas" id="Q15256"/>
<dbReference type="ProteomicsDB" id="24502"/>
<dbReference type="ProteomicsDB" id="60496">
    <molecule id="Q15256-1"/>
</dbReference>
<dbReference type="ProteomicsDB" id="60497">
    <molecule id="Q15256-3"/>
</dbReference>
<dbReference type="ProteomicsDB" id="60498">
    <molecule id="Q15256-4"/>
</dbReference>
<dbReference type="Antibodypedia" id="2547">
    <property type="antibodies" value="280 antibodies from 29 providers"/>
</dbReference>
<dbReference type="DNASU" id="5801"/>
<dbReference type="Ensembl" id="ENST00000283228.7">
    <molecule id="Q15256-1"/>
    <property type="protein sequence ID" value="ENSP00000283228.2"/>
    <property type="gene ID" value="ENSG00000153233.13"/>
</dbReference>
<dbReference type="Ensembl" id="ENST00000342084.8">
    <molecule id="Q15256-5"/>
    <property type="protein sequence ID" value="ENSP00000339605.4"/>
    <property type="gene ID" value="ENSG00000153233.13"/>
</dbReference>
<dbReference type="Ensembl" id="ENST00000378778.5">
    <molecule id="Q15256-4"/>
    <property type="protein sequence ID" value="ENSP00000368054.1"/>
    <property type="gene ID" value="ENSG00000153233.13"/>
</dbReference>
<dbReference type="Ensembl" id="ENST00000440835.6">
    <molecule id="Q15256-3"/>
    <property type="protein sequence ID" value="ENSP00000391750.2"/>
    <property type="gene ID" value="ENSG00000153233.13"/>
</dbReference>
<dbReference type="Ensembl" id="ENST00000549308.5">
    <molecule id="Q15256-3"/>
    <property type="protein sequence ID" value="ENSP00000446943.1"/>
    <property type="gene ID" value="ENSG00000153233.13"/>
</dbReference>
<dbReference type="GeneID" id="5801"/>
<dbReference type="KEGG" id="hsa:5801"/>
<dbReference type="MANE-Select" id="ENST00000283228.7">
    <property type="protein sequence ID" value="ENSP00000283228.2"/>
    <property type="RefSeq nucleotide sequence ID" value="NM_002849.4"/>
    <property type="RefSeq protein sequence ID" value="NP_002840.2"/>
</dbReference>
<dbReference type="UCSC" id="uc001swh.3">
    <molecule id="Q15256-1"/>
    <property type="organism name" value="human"/>
</dbReference>
<dbReference type="AGR" id="HGNC:9680"/>
<dbReference type="CTD" id="5801"/>
<dbReference type="DisGeNET" id="5801"/>
<dbReference type="GeneCards" id="PTPRR"/>
<dbReference type="HGNC" id="HGNC:9680">
    <property type="gene designation" value="PTPRR"/>
</dbReference>
<dbReference type="HPA" id="ENSG00000153233">
    <property type="expression patterns" value="Tissue enhanced (brain, endometrium, intestine)"/>
</dbReference>
<dbReference type="MIM" id="602853">
    <property type="type" value="gene"/>
</dbReference>
<dbReference type="neXtProt" id="NX_Q15256"/>
<dbReference type="OpenTargets" id="ENSG00000153233"/>
<dbReference type="PharmGKB" id="PA34025"/>
<dbReference type="VEuPathDB" id="HostDB:ENSG00000153233"/>
<dbReference type="eggNOG" id="KOG0789">
    <property type="taxonomic scope" value="Eukaryota"/>
</dbReference>
<dbReference type="GeneTree" id="ENSGT00940000157212"/>
<dbReference type="HOGENOM" id="CLU_001645_10_0_1"/>
<dbReference type="InParanoid" id="Q15256"/>
<dbReference type="OMA" id="NVQECEN"/>
<dbReference type="OrthoDB" id="9993594at2759"/>
<dbReference type="PAN-GO" id="Q15256">
    <property type="GO annotations" value="7 GO annotations based on evolutionary models"/>
</dbReference>
<dbReference type="PhylomeDB" id="Q15256"/>
<dbReference type="TreeFam" id="TF331016"/>
<dbReference type="BRENDA" id="3.1.3.48">
    <property type="organism ID" value="2681"/>
</dbReference>
<dbReference type="PathwayCommons" id="Q15256"/>
<dbReference type="SABIO-RK" id="Q15256"/>
<dbReference type="SignaLink" id="Q15256"/>
<dbReference type="SIGNOR" id="Q15256"/>
<dbReference type="BioGRID-ORCS" id="5801">
    <property type="hits" value="9 hits in 1177 CRISPR screens"/>
</dbReference>
<dbReference type="ChiTaRS" id="PTPRR">
    <property type="organism name" value="human"/>
</dbReference>
<dbReference type="EvolutionaryTrace" id="Q15256"/>
<dbReference type="GeneWiki" id="PTPRR"/>
<dbReference type="GenomeRNAi" id="5801"/>
<dbReference type="Pharos" id="Q15256">
    <property type="development level" value="Tbio"/>
</dbReference>
<dbReference type="PRO" id="PR:Q15256"/>
<dbReference type="Proteomes" id="UP000005640">
    <property type="component" value="Chromosome 12"/>
</dbReference>
<dbReference type="RNAct" id="Q15256">
    <property type="molecule type" value="protein"/>
</dbReference>
<dbReference type="Bgee" id="ENSG00000153233">
    <property type="expression patterns" value="Expressed in endothelial cell and 123 other cell types or tissues"/>
</dbReference>
<dbReference type="ExpressionAtlas" id="Q15256">
    <property type="expression patterns" value="baseline and differential"/>
</dbReference>
<dbReference type="GO" id="GO:0030054">
    <property type="term" value="C:cell junction"/>
    <property type="evidence" value="ECO:0000314"/>
    <property type="project" value="HPA"/>
</dbReference>
<dbReference type="GO" id="GO:0005829">
    <property type="term" value="C:cytosol"/>
    <property type="evidence" value="ECO:0000314"/>
    <property type="project" value="HPA"/>
</dbReference>
<dbReference type="GO" id="GO:0005615">
    <property type="term" value="C:extracellular space"/>
    <property type="evidence" value="ECO:0007005"/>
    <property type="project" value="UniProtKB"/>
</dbReference>
<dbReference type="GO" id="GO:0048471">
    <property type="term" value="C:perinuclear region of cytoplasm"/>
    <property type="evidence" value="ECO:0007669"/>
    <property type="project" value="UniProtKB-SubCell"/>
</dbReference>
<dbReference type="GO" id="GO:0005886">
    <property type="term" value="C:plasma membrane"/>
    <property type="evidence" value="ECO:0000314"/>
    <property type="project" value="HPA"/>
</dbReference>
<dbReference type="GO" id="GO:0019901">
    <property type="term" value="F:protein kinase binding"/>
    <property type="evidence" value="ECO:0000250"/>
    <property type="project" value="UniProtKB"/>
</dbReference>
<dbReference type="GO" id="GO:0004725">
    <property type="term" value="F:protein tyrosine phosphatase activity"/>
    <property type="evidence" value="ECO:0000318"/>
    <property type="project" value="GO_Central"/>
</dbReference>
<dbReference type="GO" id="GO:0005001">
    <property type="term" value="F:transmembrane receptor protein tyrosine phosphatase activity"/>
    <property type="evidence" value="ECO:0000304"/>
    <property type="project" value="ProtInc"/>
</dbReference>
<dbReference type="GO" id="GO:0038128">
    <property type="term" value="P:ERBB2 signaling pathway"/>
    <property type="evidence" value="ECO:0000315"/>
    <property type="project" value="UniProtKB"/>
</dbReference>
<dbReference type="GO" id="GO:0001701">
    <property type="term" value="P:in utero embryonic development"/>
    <property type="evidence" value="ECO:0000270"/>
    <property type="project" value="UniProtKB"/>
</dbReference>
<dbReference type="GO" id="GO:0010633">
    <property type="term" value="P:negative regulation of epithelial cell migration"/>
    <property type="evidence" value="ECO:0000315"/>
    <property type="project" value="UniProtKB"/>
</dbReference>
<dbReference type="GO" id="GO:0070373">
    <property type="term" value="P:negative regulation of ERK1 and ERK2 cascade"/>
    <property type="evidence" value="ECO:0000315"/>
    <property type="project" value="UniProtKB"/>
</dbReference>
<dbReference type="GO" id="GO:0006470">
    <property type="term" value="P:protein dephosphorylation"/>
    <property type="evidence" value="ECO:0000304"/>
    <property type="project" value="ProtInc"/>
</dbReference>
<dbReference type="GO" id="GO:0007165">
    <property type="term" value="P:signal transduction"/>
    <property type="evidence" value="ECO:0000318"/>
    <property type="project" value="GO_Central"/>
</dbReference>
<dbReference type="CDD" id="cd14611">
    <property type="entry name" value="R-PTPc-R"/>
    <property type="match status" value="1"/>
</dbReference>
<dbReference type="FunFam" id="3.90.190.10:FF:000020">
    <property type="entry name" value="Tyrosine-protein phosphatase non-receptor type 5"/>
    <property type="match status" value="1"/>
</dbReference>
<dbReference type="Gene3D" id="3.90.190.10">
    <property type="entry name" value="Protein tyrosine phosphatase superfamily"/>
    <property type="match status" value="1"/>
</dbReference>
<dbReference type="InterPro" id="IPR029021">
    <property type="entry name" value="Prot-tyrosine_phosphatase-like"/>
</dbReference>
<dbReference type="InterPro" id="IPR000242">
    <property type="entry name" value="PTP_cat"/>
</dbReference>
<dbReference type="InterPro" id="IPR016130">
    <property type="entry name" value="Tyr_Pase_AS"/>
</dbReference>
<dbReference type="InterPro" id="IPR003595">
    <property type="entry name" value="Tyr_Pase_cat"/>
</dbReference>
<dbReference type="InterPro" id="IPR000387">
    <property type="entry name" value="Tyr_Pase_dom"/>
</dbReference>
<dbReference type="InterPro" id="IPR008356">
    <property type="entry name" value="Tyr_Pase_KIM-con"/>
</dbReference>
<dbReference type="InterPro" id="IPR016334">
    <property type="entry name" value="Tyr_Pase_rcpt_R/non-rcpt_5"/>
</dbReference>
<dbReference type="PANTHER" id="PTHR46198">
    <property type="entry name" value="PROTEIN-TYROSINE-PHOSPHATASE"/>
    <property type="match status" value="1"/>
</dbReference>
<dbReference type="PANTHER" id="PTHR46198:SF2">
    <property type="entry name" value="RECEPTOR-TYPE TYROSINE-PROTEIN PHOSPHATASE R"/>
    <property type="match status" value="1"/>
</dbReference>
<dbReference type="Pfam" id="PF00102">
    <property type="entry name" value="Y_phosphatase"/>
    <property type="match status" value="1"/>
</dbReference>
<dbReference type="PIRSF" id="PIRSF001997">
    <property type="entry name" value="PTPRR"/>
    <property type="match status" value="1"/>
</dbReference>
<dbReference type="PRINTS" id="PR01778">
    <property type="entry name" value="KIMPTPASE"/>
</dbReference>
<dbReference type="PRINTS" id="PR00700">
    <property type="entry name" value="PRTYPHPHTASE"/>
</dbReference>
<dbReference type="SMART" id="SM00194">
    <property type="entry name" value="PTPc"/>
    <property type="match status" value="1"/>
</dbReference>
<dbReference type="SMART" id="SM00404">
    <property type="entry name" value="PTPc_motif"/>
    <property type="match status" value="1"/>
</dbReference>
<dbReference type="SUPFAM" id="SSF52799">
    <property type="entry name" value="(Phosphotyrosine protein) phosphatases II"/>
    <property type="match status" value="1"/>
</dbReference>
<dbReference type="PROSITE" id="PS00383">
    <property type="entry name" value="TYR_PHOSPHATASE_1"/>
    <property type="match status" value="1"/>
</dbReference>
<dbReference type="PROSITE" id="PS50056">
    <property type="entry name" value="TYR_PHOSPHATASE_2"/>
    <property type="match status" value="1"/>
</dbReference>
<dbReference type="PROSITE" id="PS50055">
    <property type="entry name" value="TYR_PHOSPHATASE_PTP"/>
    <property type="match status" value="1"/>
</dbReference>
<protein>
    <recommendedName>
        <fullName>Receptor-type tyrosine-protein phosphatase R</fullName>
        <shortName>R-PTP-R</shortName>
        <ecNumber>3.1.3.48</ecNumber>
    </recommendedName>
    <alternativeName>
        <fullName>Ch-1PTPase</fullName>
    </alternativeName>
    <alternativeName>
        <fullName>NC-PTPCOM1</fullName>
    </alternativeName>
    <alternativeName>
        <fullName>Protein-tyrosine phosphatase PCPTP1</fullName>
    </alternativeName>
</protein>
<comment type="function">
    <text evidence="1">Sequesters mitogen-activated protein kinases (MAPKs) such as MAPK1, MAPK3 and MAPK14 in the cytoplasm in an inactive form. The MAPKs bind to a dephosphorylated kinase interacting motif, phosphorylation of which by the protein kinase A complex releases the MAPKs for activation and translocation into the nucleus (By similarity).</text>
</comment>
<comment type="catalytic activity">
    <reaction evidence="5">
        <text>O-phospho-L-tyrosyl-[protein] + H2O = L-tyrosyl-[protein] + phosphate</text>
        <dbReference type="Rhea" id="RHEA:10684"/>
        <dbReference type="Rhea" id="RHEA-COMP:10136"/>
        <dbReference type="Rhea" id="RHEA-COMP:20101"/>
        <dbReference type="ChEBI" id="CHEBI:15377"/>
        <dbReference type="ChEBI" id="CHEBI:43474"/>
        <dbReference type="ChEBI" id="CHEBI:46858"/>
        <dbReference type="ChEBI" id="CHEBI:61978"/>
        <dbReference type="EC" id="3.1.3.48"/>
    </reaction>
</comment>
<comment type="subunit">
    <text evidence="1">Interacts with MAPKs.</text>
</comment>
<comment type="interaction">
    <interactant intactId="EBI-2265659">
        <id>Q15256</id>
    </interactant>
    <interactant intactId="EBI-641062">
        <id>P04626</id>
        <label>ERBB2</label>
    </interactant>
    <organismsDiffer>false</organismsDiffer>
    <experiments>2</experiments>
</comment>
<comment type="interaction">
    <interactant intactId="EBI-2265659">
        <id>Q15256</id>
    </interactant>
    <interactant intactId="EBI-475899">
        <id>P06213</id>
        <label>INSR</label>
    </interactant>
    <organismsDiffer>false</organismsDiffer>
    <experiments>2</experiments>
</comment>
<comment type="interaction">
    <interactant intactId="EBI-2265659">
        <id>Q15256</id>
    </interactant>
    <interactant intactId="EBI-959949">
        <id>P28482</id>
        <label>MAPK1</label>
    </interactant>
    <organismsDiffer>false</organismsDiffer>
    <experiments>4</experiments>
</comment>
<comment type="interaction">
    <interactant intactId="EBI-2265659">
        <id>Q15256</id>
    </interactant>
    <interactant intactId="EBI-73946">
        <id>Q16539</id>
        <label>MAPK14</label>
    </interactant>
    <organismsDiffer>false</organismsDiffer>
    <experiments>4</experiments>
</comment>
<comment type="interaction">
    <interactant intactId="EBI-16067395">
        <id>Q15256-1</id>
    </interactant>
    <interactant intactId="EBI-15834191">
        <id>Q16539-1</id>
        <label>MAPK14</label>
    </interactant>
    <organismsDiffer>false</organismsDiffer>
    <experiments>6</experiments>
</comment>
<comment type="interaction">
    <interactant intactId="EBI-18347359">
        <id>Q15256-5</id>
    </interactant>
    <interactant intactId="EBI-746969">
        <id>Q9H0R8</id>
        <label>GABARAPL1</label>
    </interactant>
    <organismsDiffer>false</organismsDiffer>
    <experiments>3</experiments>
</comment>
<comment type="interaction">
    <interactant intactId="EBI-18347359">
        <id>Q15256-5</id>
    </interactant>
    <interactant intactId="EBI-959949">
        <id>P28482</id>
        <label>MAPK1</label>
    </interactant>
    <organismsDiffer>false</organismsDiffer>
    <experiments>3</experiments>
</comment>
<comment type="subcellular location">
    <subcellularLocation>
        <location evidence="9">Secreted</location>
    </subcellularLocation>
</comment>
<comment type="subcellular location">
    <molecule>Isoform Alpha</molecule>
    <subcellularLocation>
        <location>Cell membrane</location>
        <topology>Single-pass type I membrane protein</topology>
    </subcellularLocation>
</comment>
<comment type="subcellular location">
    <molecule>Isoform Delta</molecule>
    <subcellularLocation>
        <location>Cytoplasm</location>
        <location>Perinuclear region</location>
    </subcellularLocation>
    <text>Locates to the perinuclear areas within the cytoplasm.</text>
</comment>
<comment type="subcellular location">
    <molecule>Isoform Gamma</molecule>
    <subcellularLocation>
        <location>Cytoplasm</location>
        <location>Perinuclear region</location>
    </subcellularLocation>
    <text>Locates to the perinuclear areas within the cytoplasm.</text>
</comment>
<comment type="alternative products">
    <event type="alternative splicing"/>
    <isoform>
        <id>Q15256-1</id>
        <name>Alpha</name>
        <sequence type="displayed"/>
    </isoform>
    <isoform>
        <id>Q15256-3</id>
        <name>Gamma</name>
        <sequence type="described" ref="VSP_005156"/>
    </isoform>
    <isoform>
        <id>Q15256-4</id>
        <name>Delta</name>
        <sequence type="described" ref="VSP_005155 VSP_005158"/>
    </isoform>
    <isoform>
        <id>Q15256-5</id>
        <name>4</name>
        <sequence type="described" ref="VSP_046352 VSP_046353"/>
    </isoform>
</comment>
<comment type="tissue specificity">
    <text evidence="6 9">Detected in cerebrospinal fluid (at protein level) (PubMed:25326458). Expressed in brain, placenta, small intestine, stomach, uterus and weakly in the prostate. Isoform alpha has been observed only in the brain. Isoform gamma is expressed in brain, placenta and uterus. Isoform delta is expressed in brain, kidney, placenta, prostate, small intestine and uterus.</text>
</comment>
<comment type="similarity">
    <text evidence="15">Belongs to the protein-tyrosine phosphatase family. Receptor class 7 subfamily.</text>
</comment>
<comment type="sequence caution" evidence="15">
    <conflict type="frameshift">
        <sequence resource="EMBL-CDS" id="CAA57957"/>
    </conflict>
</comment>
<comment type="sequence caution" evidence="15">
    <conflict type="frameshift">
        <sequence resource="EMBL-CDS" id="CAB01957"/>
    </conflict>
</comment>
<gene>
    <name type="primary">PTPRR</name>
    <name type="synonym">ECPTP</name>
    <name type="synonym">PTPRQ</name>
</gene>
<name>PTPRR_HUMAN</name>
<sequence length="657" mass="73834">MRRAVCFPALCLLLNLHAAGCFSGNNDHFLAINQKKSGKPVFIYKHSQDIEKSLDIAPQKIYRHSYHSSSEAQVSKRHQIVNSAFPRPAYDPSLNLLAMDGQDLEVENLPIPAANVIVVTLQMDVNKLNITLLRIFRQGVAAALGLLPQQVHINRLIGKKNSIELFVSPINRKTGISDALPSEEVLRSLNINVLHQSLSQFGITEVSPEKNVLQGQHEADKIWSKEGFYAVVIFLSIFVIIVTCLMILYRLKERFQLSLRQDKEKNQEIHLSPITLQPALSEAKTVHSMVQPEQAPKVLNVVVDPQGRGAPEIKATTATSVCPSPFKMKPIGLQERRGSNVSLTLDMSSLGNIEPFVSIPTPREKVAMEYLQSASRILTRSQLRDVVASSHLLQSEFMEIPMNFVDPKEIDIPRHGTKNRYKTILPNPLSRVCLRPKNVTDSLSTYINANYIRGYSGKEKAFIATQGPMINTVDDFWQMVWQEDSPVIVMITKLKEKNEKCVLYWPEKRGIYGKVEVLVISVNECDNYTIRNLVLKQGSHTQHVKHYWYTSWPDHKTPDSAQPLLQLMLDVEEDRLASQGRGPVVVHCSAGIGRTGCFIATSIGCQQLKEEGVVDALSIVCQLRMDRGGMVQTSEQYEFVHHALCLYESRLSAETVQ</sequence>
<reference key="1">
    <citation type="journal article" date="1995" name="Gene">
        <title>Cloning and expression of PCPTP1 encoding protein tyrosine phosphatase.</title>
        <authorList>
            <person name="Shiozuka K."/>
            <person name="Watanabe Y."/>
            <person name="Ikeda T."/>
            <person name="Hashimoto S."/>
            <person name="Kawashima H."/>
        </authorList>
    </citation>
    <scope>NUCLEOTIDE SEQUENCE [MRNA] (ISOFORM ALPHA)</scope>
    <scope>VARIANT ARG-314</scope>
    <source>
        <tissue>Brain</tissue>
    </source>
</reference>
<reference key="2">
    <citation type="journal article" date="2000" name="Anat. Rec.">
        <title>Protein tyrosine phosphatase (PC12, Br7,Sl) family: expression characterization in the adult human and mouse.</title>
        <authorList>
            <person name="Augustine K.A."/>
            <person name="Silbiger S.M."/>
            <person name="Bucay N."/>
            <person name="Ulias L."/>
            <person name="Boynton A."/>
            <person name="Trebasky L.D."/>
            <person name="Medlock E.S."/>
        </authorList>
    </citation>
    <scope>NUCLEOTIDE SEQUENCE [MRNA] (ISOFORMS ALPHA; GAMMA AND DELTA)</scope>
    <scope>TISSUE SPECIFICITY</scope>
    <scope>VARIANT ARG-314</scope>
    <source>
        <tissue>Brain</tissue>
        <tissue>Colon</tissue>
    </source>
</reference>
<reference key="3">
    <citation type="journal article" date="2001" name="Diabetes">
        <title>Type 2 diabetes locus on 12q15: further mapping and mutation screening of two candidate genes.</title>
        <authorList>
            <person name="Bektas A."/>
            <person name="Hughes J.N."/>
            <person name="Warram J.H."/>
            <person name="Krolewski A.S."/>
            <person name="Doria A."/>
        </authorList>
    </citation>
    <scope>NUCLEOTIDE SEQUENCE [GENOMIC DNA]</scope>
    <scope>VARIANT ARG-314</scope>
</reference>
<reference key="4">
    <citation type="submission" date="1996-09" db="EMBL/GenBank/DDBJ databases">
        <title>Cloning and characterization of novel PTP (NC-PTPCOM) from neuronal cells.</title>
        <authorList>
            <person name="Knyazev P."/>
            <person name="Cheburkin Y."/>
            <person name="Knyazev Y."/>
            <person name="Ullrich A."/>
        </authorList>
    </citation>
    <scope>NUCLEOTIDE SEQUENCE [MRNA] (ISOFORM ALPHA)</scope>
    <scope>VARIANT ARG-314</scope>
    <source>
        <tissue>Neuroblastoma</tissue>
    </source>
</reference>
<reference key="5">
    <citation type="journal article" date="2004" name="Nat. Genet.">
        <title>Complete sequencing and characterization of 21,243 full-length human cDNAs.</title>
        <authorList>
            <person name="Ota T."/>
            <person name="Suzuki Y."/>
            <person name="Nishikawa T."/>
            <person name="Otsuki T."/>
            <person name="Sugiyama T."/>
            <person name="Irie R."/>
            <person name="Wakamatsu A."/>
            <person name="Hayashi K."/>
            <person name="Sato H."/>
            <person name="Nagai K."/>
            <person name="Kimura K."/>
            <person name="Makita H."/>
            <person name="Sekine M."/>
            <person name="Obayashi M."/>
            <person name="Nishi T."/>
            <person name="Shibahara T."/>
            <person name="Tanaka T."/>
            <person name="Ishii S."/>
            <person name="Yamamoto J."/>
            <person name="Saito K."/>
            <person name="Kawai Y."/>
            <person name="Isono Y."/>
            <person name="Nakamura Y."/>
            <person name="Nagahari K."/>
            <person name="Murakami K."/>
            <person name="Yasuda T."/>
            <person name="Iwayanagi T."/>
            <person name="Wagatsuma M."/>
            <person name="Shiratori A."/>
            <person name="Sudo H."/>
            <person name="Hosoiri T."/>
            <person name="Kaku Y."/>
            <person name="Kodaira H."/>
            <person name="Kondo H."/>
            <person name="Sugawara M."/>
            <person name="Takahashi M."/>
            <person name="Kanda K."/>
            <person name="Yokoi T."/>
            <person name="Furuya T."/>
            <person name="Kikkawa E."/>
            <person name="Omura Y."/>
            <person name="Abe K."/>
            <person name="Kamihara K."/>
            <person name="Katsuta N."/>
            <person name="Sato K."/>
            <person name="Tanikawa M."/>
            <person name="Yamazaki M."/>
            <person name="Ninomiya K."/>
            <person name="Ishibashi T."/>
            <person name="Yamashita H."/>
            <person name="Murakawa K."/>
            <person name="Fujimori K."/>
            <person name="Tanai H."/>
            <person name="Kimata M."/>
            <person name="Watanabe M."/>
            <person name="Hiraoka S."/>
            <person name="Chiba Y."/>
            <person name="Ishida S."/>
            <person name="Ono Y."/>
            <person name="Takiguchi S."/>
            <person name="Watanabe S."/>
            <person name="Yosida M."/>
            <person name="Hotuta T."/>
            <person name="Kusano J."/>
            <person name="Kanehori K."/>
            <person name="Takahashi-Fujii A."/>
            <person name="Hara H."/>
            <person name="Tanase T.-O."/>
            <person name="Nomura Y."/>
            <person name="Togiya S."/>
            <person name="Komai F."/>
            <person name="Hara R."/>
            <person name="Takeuchi K."/>
            <person name="Arita M."/>
            <person name="Imose N."/>
            <person name="Musashino K."/>
            <person name="Yuuki H."/>
            <person name="Oshima A."/>
            <person name="Sasaki N."/>
            <person name="Aotsuka S."/>
            <person name="Yoshikawa Y."/>
            <person name="Matsunawa H."/>
            <person name="Ichihara T."/>
            <person name="Shiohata N."/>
            <person name="Sano S."/>
            <person name="Moriya S."/>
            <person name="Momiyama H."/>
            <person name="Satoh N."/>
            <person name="Takami S."/>
            <person name="Terashima Y."/>
            <person name="Suzuki O."/>
            <person name="Nakagawa S."/>
            <person name="Senoh A."/>
            <person name="Mizoguchi H."/>
            <person name="Goto Y."/>
            <person name="Shimizu F."/>
            <person name="Wakebe H."/>
            <person name="Hishigaki H."/>
            <person name="Watanabe T."/>
            <person name="Sugiyama A."/>
            <person name="Takemoto M."/>
            <person name="Kawakami B."/>
            <person name="Yamazaki M."/>
            <person name="Watanabe K."/>
            <person name="Kumagai A."/>
            <person name="Itakura S."/>
            <person name="Fukuzumi Y."/>
            <person name="Fujimori Y."/>
            <person name="Komiyama M."/>
            <person name="Tashiro H."/>
            <person name="Tanigami A."/>
            <person name="Fujiwara T."/>
            <person name="Ono T."/>
            <person name="Yamada K."/>
            <person name="Fujii Y."/>
            <person name="Ozaki K."/>
            <person name="Hirao M."/>
            <person name="Ohmori Y."/>
            <person name="Kawabata A."/>
            <person name="Hikiji T."/>
            <person name="Kobatake N."/>
            <person name="Inagaki H."/>
            <person name="Ikema Y."/>
            <person name="Okamoto S."/>
            <person name="Okitani R."/>
            <person name="Kawakami T."/>
            <person name="Noguchi S."/>
            <person name="Itoh T."/>
            <person name="Shigeta K."/>
            <person name="Senba T."/>
            <person name="Matsumura K."/>
            <person name="Nakajima Y."/>
            <person name="Mizuno T."/>
            <person name="Morinaga M."/>
            <person name="Sasaki M."/>
            <person name="Togashi T."/>
            <person name="Oyama M."/>
            <person name="Hata H."/>
            <person name="Watanabe M."/>
            <person name="Komatsu T."/>
            <person name="Mizushima-Sugano J."/>
            <person name="Satoh T."/>
            <person name="Shirai Y."/>
            <person name="Takahashi Y."/>
            <person name="Nakagawa K."/>
            <person name="Okumura K."/>
            <person name="Nagase T."/>
            <person name="Nomura N."/>
            <person name="Kikuchi H."/>
            <person name="Masuho Y."/>
            <person name="Yamashita R."/>
            <person name="Nakai K."/>
            <person name="Yada T."/>
            <person name="Nakamura Y."/>
            <person name="Ohara O."/>
            <person name="Isogai T."/>
            <person name="Sugano S."/>
        </authorList>
    </citation>
    <scope>NUCLEOTIDE SEQUENCE [LARGE SCALE MRNA] (ISOFORMS ALPHA AND 4)</scope>
    <scope>VARIANT ARG-314</scope>
    <source>
        <tissue>Amygdala</tissue>
        <tissue>Substantia nigra</tissue>
    </source>
</reference>
<reference key="6">
    <citation type="journal article" date="2006" name="Nature">
        <title>The finished DNA sequence of human chromosome 12.</title>
        <authorList>
            <person name="Scherer S.E."/>
            <person name="Muzny D.M."/>
            <person name="Buhay C.J."/>
            <person name="Chen R."/>
            <person name="Cree A."/>
            <person name="Ding Y."/>
            <person name="Dugan-Rocha S."/>
            <person name="Gill R."/>
            <person name="Gunaratne P."/>
            <person name="Harris R.A."/>
            <person name="Hawes A.C."/>
            <person name="Hernandez J."/>
            <person name="Hodgson A.V."/>
            <person name="Hume J."/>
            <person name="Jackson A."/>
            <person name="Khan Z.M."/>
            <person name="Kovar-Smith C."/>
            <person name="Lewis L.R."/>
            <person name="Lozado R.J."/>
            <person name="Metzker M.L."/>
            <person name="Milosavljevic A."/>
            <person name="Miner G.R."/>
            <person name="Montgomery K.T."/>
            <person name="Morgan M.B."/>
            <person name="Nazareth L.V."/>
            <person name="Scott G."/>
            <person name="Sodergren E."/>
            <person name="Song X.-Z."/>
            <person name="Steffen D."/>
            <person name="Lovering R.C."/>
            <person name="Wheeler D.A."/>
            <person name="Worley K.C."/>
            <person name="Yuan Y."/>
            <person name="Zhang Z."/>
            <person name="Adams C.Q."/>
            <person name="Ansari-Lari M.A."/>
            <person name="Ayele M."/>
            <person name="Brown M.J."/>
            <person name="Chen G."/>
            <person name="Chen Z."/>
            <person name="Clerc-Blankenburg K.P."/>
            <person name="Davis C."/>
            <person name="Delgado O."/>
            <person name="Dinh H.H."/>
            <person name="Draper H."/>
            <person name="Gonzalez-Garay M.L."/>
            <person name="Havlak P."/>
            <person name="Jackson L.R."/>
            <person name="Jacob L.S."/>
            <person name="Kelly S.H."/>
            <person name="Li L."/>
            <person name="Li Z."/>
            <person name="Liu J."/>
            <person name="Liu W."/>
            <person name="Lu J."/>
            <person name="Maheshwari M."/>
            <person name="Nguyen B.-V."/>
            <person name="Okwuonu G.O."/>
            <person name="Pasternak S."/>
            <person name="Perez L.M."/>
            <person name="Plopper F.J.H."/>
            <person name="Santibanez J."/>
            <person name="Shen H."/>
            <person name="Tabor P.E."/>
            <person name="Verduzco D."/>
            <person name="Waldron L."/>
            <person name="Wang Q."/>
            <person name="Williams G.A."/>
            <person name="Zhang J."/>
            <person name="Zhou J."/>
            <person name="Allen C.C."/>
            <person name="Amin A.G."/>
            <person name="Anyalebechi V."/>
            <person name="Bailey M."/>
            <person name="Barbaria J.A."/>
            <person name="Bimage K.E."/>
            <person name="Bryant N.P."/>
            <person name="Burch P.E."/>
            <person name="Burkett C.E."/>
            <person name="Burrell K.L."/>
            <person name="Calderon E."/>
            <person name="Cardenas V."/>
            <person name="Carter K."/>
            <person name="Casias K."/>
            <person name="Cavazos I."/>
            <person name="Cavazos S.R."/>
            <person name="Ceasar H."/>
            <person name="Chacko J."/>
            <person name="Chan S.N."/>
            <person name="Chavez D."/>
            <person name="Christopoulos C."/>
            <person name="Chu J."/>
            <person name="Cockrell R."/>
            <person name="Cox C.D."/>
            <person name="Dang M."/>
            <person name="Dathorne S.R."/>
            <person name="David R."/>
            <person name="Davis C.M."/>
            <person name="Davy-Carroll L."/>
            <person name="Deshazo D.R."/>
            <person name="Donlin J.E."/>
            <person name="D'Souza L."/>
            <person name="Eaves K.A."/>
            <person name="Egan A."/>
            <person name="Emery-Cohen A.J."/>
            <person name="Escotto M."/>
            <person name="Flagg N."/>
            <person name="Forbes L.D."/>
            <person name="Gabisi A.M."/>
            <person name="Garza M."/>
            <person name="Hamilton C."/>
            <person name="Henderson N."/>
            <person name="Hernandez O."/>
            <person name="Hines S."/>
            <person name="Hogues M.E."/>
            <person name="Huang M."/>
            <person name="Idlebird D.G."/>
            <person name="Johnson R."/>
            <person name="Jolivet A."/>
            <person name="Jones S."/>
            <person name="Kagan R."/>
            <person name="King L.M."/>
            <person name="Leal B."/>
            <person name="Lebow H."/>
            <person name="Lee S."/>
            <person name="LeVan J.M."/>
            <person name="Lewis L.C."/>
            <person name="London P."/>
            <person name="Lorensuhewa L.M."/>
            <person name="Loulseged H."/>
            <person name="Lovett D.A."/>
            <person name="Lucier A."/>
            <person name="Lucier R.L."/>
            <person name="Ma J."/>
            <person name="Madu R.C."/>
            <person name="Mapua P."/>
            <person name="Martindale A.D."/>
            <person name="Martinez E."/>
            <person name="Massey E."/>
            <person name="Mawhiney S."/>
            <person name="Meador M.G."/>
            <person name="Mendez S."/>
            <person name="Mercado C."/>
            <person name="Mercado I.C."/>
            <person name="Merritt C.E."/>
            <person name="Miner Z.L."/>
            <person name="Minja E."/>
            <person name="Mitchell T."/>
            <person name="Mohabbat F."/>
            <person name="Mohabbat K."/>
            <person name="Montgomery B."/>
            <person name="Moore N."/>
            <person name="Morris S."/>
            <person name="Munidasa M."/>
            <person name="Ngo R.N."/>
            <person name="Nguyen N.B."/>
            <person name="Nickerson E."/>
            <person name="Nwaokelemeh O.O."/>
            <person name="Nwokenkwo S."/>
            <person name="Obregon M."/>
            <person name="Oguh M."/>
            <person name="Oragunye N."/>
            <person name="Oviedo R.J."/>
            <person name="Parish B.J."/>
            <person name="Parker D.N."/>
            <person name="Parrish J."/>
            <person name="Parks K.L."/>
            <person name="Paul H.A."/>
            <person name="Payton B.A."/>
            <person name="Perez A."/>
            <person name="Perrin W."/>
            <person name="Pickens A."/>
            <person name="Primus E.L."/>
            <person name="Pu L.-L."/>
            <person name="Puazo M."/>
            <person name="Quiles M.M."/>
            <person name="Quiroz J.B."/>
            <person name="Rabata D."/>
            <person name="Reeves K."/>
            <person name="Ruiz S.J."/>
            <person name="Shao H."/>
            <person name="Sisson I."/>
            <person name="Sonaike T."/>
            <person name="Sorelle R.P."/>
            <person name="Sutton A.E."/>
            <person name="Svatek A.F."/>
            <person name="Svetz L.A."/>
            <person name="Tamerisa K.S."/>
            <person name="Taylor T.R."/>
            <person name="Teague B."/>
            <person name="Thomas N."/>
            <person name="Thorn R.D."/>
            <person name="Trejos Z.Y."/>
            <person name="Trevino B.K."/>
            <person name="Ukegbu O.N."/>
            <person name="Urban J.B."/>
            <person name="Vasquez L.I."/>
            <person name="Vera V.A."/>
            <person name="Villasana D.M."/>
            <person name="Wang L."/>
            <person name="Ward-Moore S."/>
            <person name="Warren J.T."/>
            <person name="Wei X."/>
            <person name="White F."/>
            <person name="Williamson A.L."/>
            <person name="Wleczyk R."/>
            <person name="Wooden H.S."/>
            <person name="Wooden S.H."/>
            <person name="Yen J."/>
            <person name="Yoon L."/>
            <person name="Yoon V."/>
            <person name="Zorrilla S.E."/>
            <person name="Nelson D."/>
            <person name="Kucherlapati R."/>
            <person name="Weinstock G."/>
            <person name="Gibbs R.A."/>
        </authorList>
    </citation>
    <scope>NUCLEOTIDE SEQUENCE [LARGE SCALE GENOMIC DNA]</scope>
</reference>
<reference key="7">
    <citation type="submission" date="1996-09" db="EMBL/GenBank/DDBJ databases">
        <title>Molecular cloning and characterization of human epithelial cells specific protein tyrosine phosphatase (EC-PTP).</title>
        <authorList>
            <person name="Knyazev P.G."/>
            <person name="Ullrich A."/>
        </authorList>
    </citation>
    <scope>NUCLEOTIDE SEQUENCE [MRNA] OF 289-657 (ISOFORM ALPHA)</scope>
    <scope>VARIANT ARG-314</scope>
    <source>
        <tissue>Mammary gland</tissue>
    </source>
</reference>
<reference key="8">
    <citation type="journal article" date="2015" name="Mol. Cell. Proteomics">
        <title>Identification of chondroitin sulfate linkage region glycopeptides reveals prohormones as a novel class of proteoglycans.</title>
        <authorList>
            <person name="Noborn F."/>
            <person name="Gomez Toledo A."/>
            <person name="Sihlbom C."/>
            <person name="Lengqvist J."/>
            <person name="Fries E."/>
            <person name="Kjellen L."/>
            <person name="Nilsson J."/>
            <person name="Larson G."/>
        </authorList>
    </citation>
    <scope>SUBCELLULAR LOCATION</scope>
    <scope>TISSUE SPECIFICITY</scope>
    <scope>GLYCOSYLATION AT SER-23</scope>
</reference>
<reference key="9">
    <citation type="journal article" date="2006" name="Biochem. J.">
        <title>Crystal structures and inhibitor identification for PTPN5, PTPRR and PTPN7: a family of human MAPK-specific protein tyrosine phosphatases.</title>
        <authorList>
            <person name="Eswaran J."/>
            <person name="von Kries J.P."/>
            <person name="Marsden B."/>
            <person name="Longman E."/>
            <person name="Debreczeni J.E."/>
            <person name="Ugochukwu E."/>
            <person name="Turnbull A."/>
            <person name="Lee W.H."/>
            <person name="Knapp S."/>
            <person name="Barr A.J."/>
        </authorList>
    </citation>
    <scope>X-RAY CRYSTALLOGRAPHY (2.3 ANGSTROMS) OF 375-655</scope>
</reference>
<evidence type="ECO:0000250" key="1"/>
<evidence type="ECO:0000250" key="2">
    <source>
        <dbReference type="UniProtKB" id="Q62132"/>
    </source>
</evidence>
<evidence type="ECO:0000255" key="3"/>
<evidence type="ECO:0000255" key="4">
    <source>
        <dbReference type="PROSITE-ProRule" id="PRU00160"/>
    </source>
</evidence>
<evidence type="ECO:0000255" key="5">
    <source>
        <dbReference type="PROSITE-ProRule" id="PRU10044"/>
    </source>
</evidence>
<evidence type="ECO:0000269" key="6">
    <source>
    </source>
</evidence>
<evidence type="ECO:0000269" key="7">
    <source>
    </source>
</evidence>
<evidence type="ECO:0000269" key="8">
    <source>
    </source>
</evidence>
<evidence type="ECO:0000269" key="9">
    <source>
    </source>
</evidence>
<evidence type="ECO:0000269" key="10">
    <source>
    </source>
</evidence>
<evidence type="ECO:0000269" key="11">
    <source ref="4"/>
</evidence>
<evidence type="ECO:0000269" key="12">
    <source ref="7"/>
</evidence>
<evidence type="ECO:0000303" key="13">
    <source>
    </source>
</evidence>
<evidence type="ECO:0000303" key="14">
    <source>
    </source>
</evidence>
<evidence type="ECO:0000305" key="15"/>
<evidence type="ECO:0007829" key="16">
    <source>
        <dbReference type="PDB" id="2A8B"/>
    </source>
</evidence>
<feature type="signal peptide" evidence="3">
    <location>
        <begin position="1"/>
        <end position="21"/>
    </location>
</feature>
<feature type="chain" id="PRO_0000025459" description="Receptor-type tyrosine-protein phosphatase R">
    <location>
        <begin position="22"/>
        <end position="657"/>
    </location>
</feature>
<feature type="topological domain" description="Extracellular" evidence="3">
    <location>
        <begin position="22"/>
        <end position="227"/>
    </location>
</feature>
<feature type="transmembrane region" description="Helical" evidence="3">
    <location>
        <begin position="228"/>
        <end position="248"/>
    </location>
</feature>
<feature type="topological domain" description="Cytoplasmic" evidence="3">
    <location>
        <begin position="249"/>
        <end position="657"/>
    </location>
</feature>
<feature type="domain" description="Tyrosine-protein phosphatase" evidence="4">
    <location>
        <begin position="393"/>
        <end position="647"/>
    </location>
</feature>
<feature type="active site" description="Phosphocysteine intermediate" evidence="4 5">
    <location>
        <position position="588"/>
    </location>
</feature>
<feature type="binding site" evidence="1">
    <location>
        <position position="554"/>
    </location>
    <ligand>
        <name>substrate</name>
    </ligand>
</feature>
<feature type="binding site" evidence="1">
    <location>
        <begin position="588"/>
        <end position="594"/>
    </location>
    <ligand>
        <name>substrate</name>
    </ligand>
</feature>
<feature type="binding site" evidence="1">
    <location>
        <position position="632"/>
    </location>
    <ligand>
        <name>substrate</name>
    </ligand>
</feature>
<feature type="modified residue" description="Phosphoserine" evidence="2">
    <location>
        <position position="272"/>
    </location>
</feature>
<feature type="modified residue" description="Phosphoserine; by PKA" evidence="2">
    <location>
        <position position="339"/>
    </location>
</feature>
<feature type="glycosylation site" description="O-linked (Xyl...) (chondroitin sulfate) serine" evidence="9">
    <location>
        <position position="23"/>
    </location>
</feature>
<feature type="glycosylation site" description="N-linked (GlcNAc...) asparagine" evidence="3">
    <location>
        <position position="129"/>
    </location>
</feature>
<feature type="splice variant" id="VSP_005156" description="In isoform Gamma." evidence="13">
    <location>
        <begin position="1"/>
        <end position="245"/>
    </location>
</feature>
<feature type="splice variant" id="VSP_005155" description="In isoform Delta." evidence="13">
    <location>
        <begin position="1"/>
        <end position="206"/>
    </location>
</feature>
<feature type="splice variant" id="VSP_046352" description="In isoform 4." evidence="14">
    <original>MRRAVCF</original>
    <variation>MQSISKQ</variation>
    <location>
        <begin position="1"/>
        <end position="7"/>
    </location>
</feature>
<feature type="splice variant" id="VSP_046353" description="In isoform 4." evidence="14">
    <location>
        <begin position="8"/>
        <end position="119"/>
    </location>
</feature>
<feature type="splice variant" id="VSP_005158" description="In isoform Delta." evidence="13">
    <original>SPE</original>
    <variation>MNQ</variation>
    <location>
        <begin position="207"/>
        <end position="209"/>
    </location>
</feature>
<feature type="sequence variant" id="VAR_057140" description="In dbSNP:rs35987017.">
    <original>Y</original>
    <variation>H</variation>
    <location>
        <position position="249"/>
    </location>
</feature>
<feature type="sequence variant" id="VAR_014283" description="In dbSNP:rs3803036." evidence="6 7 8 10 11 12">
    <original>K</original>
    <variation>R</variation>
    <location>
        <position position="314"/>
    </location>
</feature>
<feature type="sequence variant" id="VAR_057141" description="In dbSNP:rs35387004.">
    <original>V</original>
    <variation>I</variation>
    <location>
        <position position="386"/>
    </location>
</feature>
<feature type="sequence variant" id="VAR_057142" description="In dbSNP:rs35390084.">
    <original>V</original>
    <variation>I</variation>
    <location>
        <position position="439"/>
    </location>
</feature>
<feature type="sequence conflict" description="In Ref. 5; BAH12227." evidence="15" ref="5">
    <original>P</original>
    <variation>S</variation>
    <location>
        <position position="407"/>
    </location>
</feature>
<feature type="helix" evidence="16">
    <location>
        <begin position="380"/>
        <end position="386"/>
    </location>
</feature>
<feature type="helix" evidence="16">
    <location>
        <begin position="390"/>
        <end position="398"/>
    </location>
</feature>
<feature type="helix" evidence="16">
    <location>
        <begin position="407"/>
        <end position="409"/>
    </location>
</feature>
<feature type="helix" evidence="16">
    <location>
        <begin position="415"/>
        <end position="418"/>
    </location>
</feature>
<feature type="helix" evidence="16">
    <location>
        <begin position="428"/>
        <end position="430"/>
    </location>
</feature>
<feature type="strand" evidence="16">
    <location>
        <begin position="431"/>
        <end position="433"/>
    </location>
</feature>
<feature type="helix" evidence="16">
    <location>
        <begin position="442"/>
        <end position="445"/>
    </location>
</feature>
<feature type="strand" evidence="16">
    <location>
        <begin position="446"/>
        <end position="452"/>
    </location>
</feature>
<feature type="helix" evidence="16">
    <location>
        <begin position="455"/>
        <end position="457"/>
    </location>
</feature>
<feature type="strand" evidence="16">
    <location>
        <begin position="461"/>
        <end position="465"/>
    </location>
</feature>
<feature type="helix" evidence="16">
    <location>
        <begin position="470"/>
        <end position="472"/>
    </location>
</feature>
<feature type="helix" evidence="16">
    <location>
        <begin position="473"/>
        <end position="483"/>
    </location>
</feature>
<feature type="strand" evidence="16">
    <location>
        <begin position="487"/>
        <end position="492"/>
    </location>
</feature>
<feature type="strand" evidence="16">
    <location>
        <begin position="494"/>
        <end position="499"/>
    </location>
</feature>
<feature type="strand" evidence="16">
    <location>
        <begin position="507"/>
        <end position="512"/>
    </location>
</feature>
<feature type="strand" evidence="16">
    <location>
        <begin position="515"/>
        <end position="524"/>
    </location>
</feature>
<feature type="strand" evidence="16">
    <location>
        <begin position="529"/>
        <end position="537"/>
    </location>
</feature>
<feature type="strand" evidence="16">
    <location>
        <begin position="540"/>
        <end position="549"/>
    </location>
</feature>
<feature type="strand" evidence="16">
    <location>
        <begin position="554"/>
        <end position="556"/>
    </location>
</feature>
<feature type="helix" evidence="16">
    <location>
        <begin position="562"/>
        <end position="576"/>
    </location>
</feature>
<feature type="strand" evidence="16">
    <location>
        <begin position="584"/>
        <end position="587"/>
    </location>
</feature>
<feature type="strand" evidence="16">
    <location>
        <begin position="589"/>
        <end position="592"/>
    </location>
</feature>
<feature type="helix" evidence="16">
    <location>
        <begin position="593"/>
        <end position="611"/>
    </location>
</feature>
<feature type="strand" evidence="16">
    <location>
        <begin position="612"/>
        <end position="614"/>
    </location>
</feature>
<feature type="helix" evidence="16">
    <location>
        <begin position="616"/>
        <end position="626"/>
    </location>
</feature>
<feature type="helix" evidence="16">
    <location>
        <begin position="634"/>
        <end position="648"/>
    </location>
</feature>
<organism>
    <name type="scientific">Homo sapiens</name>
    <name type="common">Human</name>
    <dbReference type="NCBI Taxonomy" id="9606"/>
    <lineage>
        <taxon>Eukaryota</taxon>
        <taxon>Metazoa</taxon>
        <taxon>Chordata</taxon>
        <taxon>Craniata</taxon>
        <taxon>Vertebrata</taxon>
        <taxon>Euteleostomi</taxon>
        <taxon>Mammalia</taxon>
        <taxon>Eutheria</taxon>
        <taxon>Euarchontoglires</taxon>
        <taxon>Primates</taxon>
        <taxon>Haplorrhini</taxon>
        <taxon>Catarrhini</taxon>
        <taxon>Hominidae</taxon>
        <taxon>Homo</taxon>
    </lineage>
</organism>